<protein>
    <recommendedName>
        <fullName>Envelopment polyprotein</fullName>
    </recommendedName>
    <alternativeName>
        <fullName>M polyprotein</fullName>
    </alternativeName>
    <component>
        <recommendedName>
            <fullName evidence="2">Glycoprotein N</fullName>
            <shortName>Gn</shortName>
        </recommendedName>
        <alternativeName>
            <fullName>Glycoprotein G1</fullName>
        </alternativeName>
    </component>
    <component>
        <recommendedName>
            <fullName evidence="2">Glycoprotein C</fullName>
            <shortName>Gc</shortName>
        </recommendedName>
        <alternativeName>
            <fullName>Glycoprotein G2</fullName>
        </alternativeName>
    </component>
</protein>
<keyword id="KW-1015">Disulfide bond</keyword>
<keyword id="KW-1170">Fusion of virus membrane with host endosomal membrane</keyword>
<keyword id="KW-1168">Fusion of virus membrane with host membrane</keyword>
<keyword id="KW-0325">Glycoprotein</keyword>
<keyword id="KW-1038">Host endoplasmic reticulum</keyword>
<keyword id="KW-1040">Host Golgi apparatus</keyword>
<keyword id="KW-1043">Host membrane</keyword>
<keyword id="KW-1045">Host mitochondrion</keyword>
<keyword id="KW-0945">Host-virus interaction</keyword>
<keyword id="KW-1090">Inhibition of host innate immune response by virus</keyword>
<keyword id="KW-1113">Inhibition of host RLR pathway by virus</keyword>
<keyword id="KW-1110">Inhibition of host TRAFs by virus</keyword>
<keyword id="KW-0472">Membrane</keyword>
<keyword id="KW-0479">Metal-binding</keyword>
<keyword id="KW-0597">Phosphoprotein</keyword>
<keyword id="KW-0677">Repeat</keyword>
<keyword id="KW-0732">Signal</keyword>
<keyword id="KW-0812">Transmembrane</keyword>
<keyword id="KW-1133">Transmembrane helix</keyword>
<keyword id="KW-1161">Viral attachment to host cell</keyword>
<keyword id="KW-0261">Viral envelope protein</keyword>
<keyword id="KW-0899">Viral immunoevasion</keyword>
<keyword id="KW-1162">Viral penetration into host cytoplasm</keyword>
<keyword id="KW-0946">Virion</keyword>
<keyword id="KW-1164">Virus endocytosis by host</keyword>
<keyword id="KW-1160">Virus entry into host cell</keyword>
<keyword id="KW-0862">Zinc</keyword>
<keyword id="KW-0863">Zinc-finger</keyword>
<name>GP_HANTH</name>
<comment type="function">
    <molecule>Glycoprotein N</molecule>
    <text evidence="2 4">Forms homotetramers with glycoprotein C at the surface of the virion (By similarity). Attaches the virion to host cell receptors including integrin ITGAV/ITGB3 (By similarity). This attachment induces virion internalization predominantly through clathrin-dependent endocytosis (By similarity). May also bind to host C1QBP for virus entry into the host cell (By similarity). Mediates the assembly and budding of infectious virus particles through its interaction with the nucleocapsid protein and the viral genome (By similarity). May dysregulate normal immune and endothelial cell responses through an ITAM motif (By similarity). Translocates to mitochondria, binds to host TUFM and recruits MAP1LC3B (By similarity). These interactions induce mitochondrial autophagy and therefore destruction of host MAVS leading to inhibition of type I interferon (IFN) responses (By similarity). Concomitant breakdown of glycoprotein N is apparently prevented by the nucleoprotein that may inhibit Gn-stimulated autophagosome-lysosome fusion (By similarity). Interacts with the viral genomic RNA (By similarity).</text>
</comment>
<comment type="function">
    <molecule>Glycoprotein C</molecule>
    <text evidence="2">Forms homotetramers with glycoprotein N at the surface of the virion (By similarity). Attaches the virion to host cell receptors including integrin ITGAV/ITGB3 (By similarity). This attachment induces virion internalization predominantly through clathrin-dependent endocytosis (By similarity). May also bind to host C1QBP for virus entry into the host cell (By similarity). Class II fusion protein that promotes fusion of viral membrane with host endosomal membrane after endocytosis of the virion (By similarity).</text>
</comment>
<comment type="subunit">
    <molecule>Glycoprotein N</molecule>
    <text evidence="2 3">Homodimer (By similarity). Homotetramer; forms heterotetrameric Gn-Gc spikes in the pre-fusion conformation (By similarity). Interacts (via C-terminus) with the nucleoprotein (By similarity). Interacts with host TUFM; this interaction contributes to the virus-induced degradation of mitochondria by autophagy, which leads to degradation of host MAVS and inhibition of type I interferon (IFN) responses (By similarity). Interacts with host MAP1LC3B; this interaction contributes to the virus-induced degradation of mitochondria by autophagy, which leads to degradation of host MAVS and inhibition of type I interferon (IFN) responses (By similarity).</text>
</comment>
<comment type="subunit">
    <molecule>Glycoprotein C</molecule>
    <text evidence="2 4">Homodimer. Homotetramer; forms heterotetrameric Gn-Gc spikes in the pre-fusion conformation. Homotrimer; forms homotrimer in the post-fusion conformation at acidic pH (By similarity). Interacts (via C-terminus) with the nucleoprotein (By similarity).</text>
</comment>
<comment type="subcellular location">
    <molecule>Glycoprotein N</molecule>
    <subcellularLocation>
        <location evidence="2">Virion membrane</location>
        <topology>Multi-pass membrane protein</topology>
    </subcellularLocation>
    <subcellularLocation>
        <location evidence="2">Host cell surface</location>
    </subcellularLocation>
    <subcellularLocation>
        <location evidence="2">Host Golgi apparatus membrane</location>
        <topology evidence="2">Multi-pass membrane protein</topology>
    </subcellularLocation>
    <subcellularLocation>
        <location evidence="2">Host endoplasmic reticulum membrane</location>
        <topology evidence="2">Multi-pass membrane protein</topology>
    </subcellularLocation>
    <subcellularLocation>
        <location evidence="2">Host mitochondrion</location>
    </subcellularLocation>
    <text evidence="4">Interaction between glycoprotein N and glycoprotein C is essential for proper targeting of glycoprotein N to the host Golgi complex, where virion budding occurs.</text>
</comment>
<comment type="subcellular location">
    <molecule>Glycoprotein C</molecule>
    <subcellularLocation>
        <location evidence="2">Virion membrane</location>
        <topology>Single-pass type I membrane protein</topology>
    </subcellularLocation>
    <subcellularLocation>
        <location evidence="2">Host cell surface</location>
    </subcellularLocation>
    <subcellularLocation>
        <location evidence="2">Host Golgi apparatus membrane</location>
        <topology evidence="2">Single-pass type I membrane protein</topology>
    </subcellularLocation>
    <subcellularLocation>
        <location evidence="2">Host endoplasmic reticulum membrane</location>
        <topology evidence="2">Single-pass type I membrane protein</topology>
    </subcellularLocation>
    <text evidence="2 9">Budding probably takes place at the host Golgi (Probable). Glycoprotein C cytoplasmic tail is important for efficient Golgi localization (By similarity).</text>
</comment>
<comment type="domain">
    <molecule>Glycoprotein N</molecule>
    <text evidence="2 3 4 6">The YxxL motif at the C-terminus is indispensable for the interaction with MAP1LC3B and for the Gn-mediated induction of mitochondrial autophagy (By similarity). The cytoplasmic tail is involved in the inhibition of the host innate immune response (By similarity). The C-terminus of the cytoplasmic tail is involved in binding to the viral genome and the nucleocapsid (By similarity). Contains 2 contiguous zinc-fingers (By similarity).</text>
</comment>
<comment type="domain">
    <molecule>Glycoprotein C</molecule>
    <text evidence="4">The C-terminus is necessary for proper localization in the Golgi (By similarity). The cytoplasmic tail is involved in binding to the nucleocapsid (By similarity).</text>
</comment>
<comment type="PTM">
    <molecule>Envelopment polyprotein</molecule>
    <text evidence="2">Envelope polyprotein precursor is quickly cleaved in vivo just after synthesis, presumably by host signal peptidase.</text>
</comment>
<comment type="similarity">
    <text evidence="9">Belongs to the hantavirus envelope glycoprotein family.</text>
</comment>
<organismHost>
    <name type="scientific">Apodemus agrarius</name>
    <name type="common">Eurasian field mouse</name>
    <dbReference type="NCBI Taxonomy" id="39030"/>
</organismHost>
<organismHost>
    <name type="scientific">Homo sapiens</name>
    <name type="common">Human</name>
    <dbReference type="NCBI Taxonomy" id="9606"/>
</organismHost>
<feature type="signal peptide" evidence="7">
    <location>
        <begin position="1"/>
        <end position="18"/>
    </location>
</feature>
<feature type="chain" id="PRO_0000036809" description="Envelopment polyprotein">
    <location>
        <begin position="19"/>
        <end position="1134"/>
    </location>
</feature>
<feature type="chain" id="PRO_0000036810" description="Glycoprotein N" evidence="1">
    <location>
        <begin position="19"/>
        <end position="648"/>
    </location>
</feature>
<feature type="chain" id="PRO_0000036811" description="Glycoprotein C" evidence="1">
    <location>
        <begin position="649"/>
        <end position="1134"/>
    </location>
</feature>
<feature type="topological domain" description="Lumenal" evidence="7">
    <location>
        <begin position="19"/>
        <end position="487"/>
    </location>
</feature>
<feature type="transmembrane region" description="Helical" evidence="7">
    <location>
        <begin position="488"/>
        <end position="508"/>
    </location>
</feature>
<feature type="topological domain" description="Cytoplasmic" evidence="7">
    <location>
        <begin position="509"/>
        <end position="627"/>
    </location>
</feature>
<feature type="transmembrane region" description="Helical" evidence="7">
    <location>
        <begin position="628"/>
        <end position="648"/>
    </location>
</feature>
<feature type="topological domain" description="Lumenal" evidence="7">
    <location>
        <begin position="649"/>
        <end position="1104"/>
    </location>
</feature>
<feature type="transmembrane region" description="Helical" evidence="7">
    <location>
        <begin position="1105"/>
        <end position="1125"/>
    </location>
</feature>
<feature type="topological domain" description="Cytoplasmic" evidence="7">
    <location>
        <begin position="1126"/>
        <end position="1134"/>
    </location>
</feature>
<feature type="domain" description="ITAM" evidence="8">
    <location>
        <begin position="611"/>
        <end position="634"/>
    </location>
</feature>
<feature type="zinc finger region" description="CCHC-type 1" evidence="6">
    <location>
        <begin position="545"/>
        <end position="565"/>
    </location>
</feature>
<feature type="zinc finger region" description="CCHC-type 2" evidence="6">
    <location>
        <begin position="570"/>
        <end position="591"/>
    </location>
</feature>
<feature type="region of interest" description="Binding to the ribonucleoprotein" evidence="6">
    <location>
        <begin position="516"/>
        <end position="533"/>
    </location>
</feature>
<feature type="region of interest" description="Binding to the ribonucleoprotein" evidence="4">
    <location>
        <begin position="588"/>
        <end position="605"/>
    </location>
</feature>
<feature type="region of interest" description="Binding to the ribonucleoprotein" evidence="6">
    <location>
        <begin position="592"/>
        <end position="603"/>
    </location>
</feature>
<feature type="region of interest" description="Binding to the ribonucleoprotein" evidence="4">
    <location>
        <begin position="611"/>
        <end position="625"/>
    </location>
</feature>
<feature type="region of interest" description="Fusion loop" evidence="5">
    <location>
        <begin position="756"/>
        <end position="776"/>
    </location>
</feature>
<feature type="region of interest" description="Binding to the ribonucleoprotein" evidence="4">
    <location>
        <begin position="1121"/>
        <end position="1134"/>
    </location>
</feature>
<feature type="short sequence motif" description="YxxL" evidence="2">
    <location>
        <begin position="615"/>
        <end position="618"/>
    </location>
</feature>
<feature type="site" description="Cleavage; by host signal peptidase" evidence="2">
    <location>
        <begin position="648"/>
        <end position="649"/>
    </location>
</feature>
<feature type="glycosylation site" description="N-linked (GlcNAc...) asparagine; by host" evidence="7">
    <location>
        <position position="134"/>
    </location>
</feature>
<feature type="glycosylation site" description="N-linked (GlcNAc...) asparagine; by host" evidence="7">
    <location>
        <position position="235"/>
    </location>
</feature>
<feature type="glycosylation site" description="N-linked (GlcNAc...) asparagine; by host" evidence="7">
    <location>
        <position position="347"/>
    </location>
</feature>
<feature type="glycosylation site" description="N-linked (GlcNAc...) asparagine; by host" evidence="7">
    <location>
        <position position="399"/>
    </location>
</feature>
<feature type="glycosylation site" description="N-linked (GlcNAc...) asparagine; by host" evidence="2">
    <location>
        <position position="927"/>
    </location>
</feature>
<feature type="disulfide bond" evidence="6">
    <location>
        <begin position="29"/>
        <end position="151"/>
    </location>
</feature>
<feature type="disulfide bond" evidence="6">
    <location>
        <begin position="63"/>
        <end position="157"/>
    </location>
</feature>
<feature type="disulfide bond" evidence="6">
    <location>
        <begin position="109"/>
        <end position="128"/>
    </location>
</feature>
<feature type="disulfide bond" evidence="6">
    <location>
        <begin position="133"/>
        <end position="138"/>
    </location>
</feature>
<feature type="disulfide bond" evidence="6">
    <location>
        <begin position="175"/>
        <end position="185"/>
    </location>
</feature>
<feature type="disulfide bond" evidence="6">
    <location>
        <begin position="210"/>
        <end position="247"/>
    </location>
</feature>
<feature type="disulfide bond" evidence="6">
    <location>
        <begin position="234"/>
        <end position="351"/>
    </location>
</feature>
<feature type="disulfide bond" evidence="6">
    <location>
        <begin position="380"/>
        <end position="389"/>
    </location>
</feature>
<feature type="disulfide bond" evidence="6">
    <location>
        <begin position="405"/>
        <end position="424"/>
    </location>
</feature>
<feature type="disulfide bond" evidence="6">
    <location>
        <begin position="452"/>
        <end position="475"/>
    </location>
</feature>
<feature type="disulfide bond" evidence="2">
    <location>
        <begin position="734"/>
        <end position="769"/>
    </location>
</feature>
<feature type="disulfide bond" evidence="2">
    <location>
        <begin position="738"/>
        <end position="776"/>
    </location>
</feature>
<feature type="disulfide bond" evidence="2">
    <location>
        <begin position="750"/>
        <end position="884"/>
    </location>
</feature>
<feature type="disulfide bond" evidence="2">
    <location>
        <begin position="764"/>
        <end position="895"/>
    </location>
</feature>
<feature type="disulfide bond" evidence="2">
    <location>
        <begin position="779"/>
        <end position="903"/>
    </location>
</feature>
<feature type="disulfide bond" evidence="2">
    <location>
        <begin position="805"/>
        <end position="814"/>
    </location>
</feature>
<feature type="disulfide bond" evidence="2">
    <location>
        <begin position="822"/>
        <end position="831"/>
    </location>
</feature>
<feature type="disulfide bond" evidence="2">
    <location>
        <begin position="969"/>
        <end position="999"/>
    </location>
</feature>
<feature type="disulfide bond" evidence="2">
    <location>
        <begin position="992"/>
        <end position="1044"/>
    </location>
</feature>
<feature type="disulfide bond" evidence="2">
    <location>
        <begin position="1009"/>
        <end position="1014"/>
    </location>
</feature>
<feature type="disulfide bond" evidence="2">
    <location>
        <begin position="1045"/>
        <end position="1050"/>
    </location>
</feature>
<feature type="disulfide bond" evidence="6">
    <location>
        <begin position="1084"/>
        <end position="1088"/>
    </location>
</feature>
<gene>
    <name type="primary">GP</name>
</gene>
<evidence type="ECO:0000250" key="1"/>
<evidence type="ECO:0000250" key="2">
    <source>
        <dbReference type="UniProtKB" id="P08668"/>
    </source>
</evidence>
<evidence type="ECO:0000250" key="3">
    <source>
        <dbReference type="UniProtKB" id="P0DTJ1"/>
    </source>
</evidence>
<evidence type="ECO:0000250" key="4">
    <source>
        <dbReference type="UniProtKB" id="P27312"/>
    </source>
</evidence>
<evidence type="ECO:0000250" key="5">
    <source>
        <dbReference type="UniProtKB" id="P41266"/>
    </source>
</evidence>
<evidence type="ECO:0000250" key="6">
    <source>
        <dbReference type="UniProtKB" id="Q9E006"/>
    </source>
</evidence>
<evidence type="ECO:0000255" key="7"/>
<evidence type="ECO:0000255" key="8">
    <source>
        <dbReference type="PROSITE-ProRule" id="PRU00379"/>
    </source>
</evidence>
<evidence type="ECO:0000305" key="9"/>
<reference key="1">
    <citation type="journal article" date="1988" name="J. Gen. Virol.">
        <title>Conservation of antigenic properties and sequences encoding the envelope proteins of prototype Hantaan virus and two virus isolates from Korean haemorrhagic fever patients.</title>
        <authorList>
            <person name="Schmaljohn C.S."/>
            <person name="Arikawa J."/>
            <person name="Hasty S.E."/>
            <person name="Rasmussen L."/>
            <person name="Lee H.W."/>
            <person name="Lee P.W."/>
            <person name="Dalrymple J.M."/>
        </authorList>
    </citation>
    <scope>NUCLEOTIDE SEQUENCE [GENOMIC RNA]</scope>
</reference>
<reference key="2">
    <citation type="journal article" date="2014" name="Viruses">
        <title>Hantavirus Gn and Gc envelope glycoproteins: key structural units for virus cell entry and virus assembly.</title>
        <authorList>
            <person name="Cifuentes-Munoz N."/>
            <person name="Salazar-Quiroz N."/>
            <person name="Tischler N.D."/>
        </authorList>
    </citation>
    <scope>REVIEW</scope>
</reference>
<organism>
    <name type="scientific">Hantaan virus (strain Hojo)</name>
    <name type="common">Hojo virus</name>
    <name type="synonym">Korean hemorrhagic fever virus</name>
    <dbReference type="NCBI Taxonomy" id="11583"/>
    <lineage>
        <taxon>Viruses</taxon>
        <taxon>Riboviria</taxon>
        <taxon>Orthornavirae</taxon>
        <taxon>Negarnaviricota</taxon>
        <taxon>Polyploviricotina</taxon>
        <taxon>Ellioviricetes</taxon>
        <taxon>Bunyavirales</taxon>
        <taxon>Hantaviridae</taxon>
        <taxon>Mammantavirinae</taxon>
        <taxon>Orthohantavirus</taxon>
        <taxon>Orthohantavirus hantanense</taxon>
    </lineage>
</organism>
<dbReference type="EMBL" id="D00376">
    <property type="protein sequence ID" value="BAA00279.1"/>
    <property type="molecule type" value="Genomic_RNA"/>
</dbReference>
<dbReference type="SMR" id="P16493"/>
<dbReference type="GlyCosmos" id="P16493">
    <property type="glycosylation" value="5 sites, No reported glycans"/>
</dbReference>
<dbReference type="GO" id="GO:0044167">
    <property type="term" value="C:host cell endoplasmic reticulum membrane"/>
    <property type="evidence" value="ECO:0007669"/>
    <property type="project" value="UniProtKB-SubCell"/>
</dbReference>
<dbReference type="GO" id="GO:0044178">
    <property type="term" value="C:host cell Golgi membrane"/>
    <property type="evidence" value="ECO:0007669"/>
    <property type="project" value="UniProtKB-SubCell"/>
</dbReference>
<dbReference type="GO" id="GO:0033650">
    <property type="term" value="C:host cell mitochondrion"/>
    <property type="evidence" value="ECO:0007669"/>
    <property type="project" value="UniProtKB-SubCell"/>
</dbReference>
<dbReference type="GO" id="GO:0044228">
    <property type="term" value="C:host cell surface"/>
    <property type="evidence" value="ECO:0007669"/>
    <property type="project" value="UniProtKB-SubCell"/>
</dbReference>
<dbReference type="GO" id="GO:0016020">
    <property type="term" value="C:membrane"/>
    <property type="evidence" value="ECO:0007669"/>
    <property type="project" value="UniProtKB-KW"/>
</dbReference>
<dbReference type="GO" id="GO:0019031">
    <property type="term" value="C:viral envelope"/>
    <property type="evidence" value="ECO:0007669"/>
    <property type="project" value="UniProtKB-KW"/>
</dbReference>
<dbReference type="GO" id="GO:0055036">
    <property type="term" value="C:virion membrane"/>
    <property type="evidence" value="ECO:0007669"/>
    <property type="project" value="UniProtKB-SubCell"/>
</dbReference>
<dbReference type="GO" id="GO:0008270">
    <property type="term" value="F:zinc ion binding"/>
    <property type="evidence" value="ECO:0007669"/>
    <property type="project" value="UniProtKB-KW"/>
</dbReference>
<dbReference type="GO" id="GO:0075509">
    <property type="term" value="P:endocytosis involved in viral entry into host cell"/>
    <property type="evidence" value="ECO:0007669"/>
    <property type="project" value="UniProtKB-KW"/>
</dbReference>
<dbReference type="GO" id="GO:0039654">
    <property type="term" value="P:fusion of virus membrane with host endosome membrane"/>
    <property type="evidence" value="ECO:0007669"/>
    <property type="project" value="UniProtKB-KW"/>
</dbReference>
<dbReference type="GO" id="GO:0007165">
    <property type="term" value="P:signal transduction"/>
    <property type="evidence" value="ECO:0007669"/>
    <property type="project" value="InterPro"/>
</dbReference>
<dbReference type="GO" id="GO:0052170">
    <property type="term" value="P:symbiont-mediated suppression of host innate immune response"/>
    <property type="evidence" value="ECO:0007669"/>
    <property type="project" value="UniProtKB-KW"/>
</dbReference>
<dbReference type="GO" id="GO:0039527">
    <property type="term" value="P:symbiont-mediated suppression of host TRAF-mediated signal transduction"/>
    <property type="evidence" value="ECO:0007669"/>
    <property type="project" value="UniProtKB-KW"/>
</dbReference>
<dbReference type="GO" id="GO:0019062">
    <property type="term" value="P:virion attachment to host cell"/>
    <property type="evidence" value="ECO:0007669"/>
    <property type="project" value="UniProtKB-KW"/>
</dbReference>
<dbReference type="Gene3D" id="1.10.8.1320">
    <property type="match status" value="1"/>
</dbReference>
<dbReference type="InterPro" id="IPR016402">
    <property type="entry name" value="Envelope_glycoprot_Hantavirus"/>
</dbReference>
<dbReference type="InterPro" id="IPR048791">
    <property type="entry name" value="Gc_C_bunya"/>
</dbReference>
<dbReference type="InterPro" id="IPR048790">
    <property type="entry name" value="Gn-B_hanta"/>
</dbReference>
<dbReference type="InterPro" id="IPR002532">
    <property type="entry name" value="Hanta_Gc_N"/>
</dbReference>
<dbReference type="InterPro" id="IPR002534">
    <property type="entry name" value="Hanta_Gn-H"/>
</dbReference>
<dbReference type="InterPro" id="IPR012316">
    <property type="entry name" value="ITAM_motif_hantavir-typ"/>
</dbReference>
<dbReference type="Pfam" id="PF20682">
    <property type="entry name" value="Hanta_Gc_C"/>
    <property type="match status" value="1"/>
</dbReference>
<dbReference type="Pfam" id="PF01561">
    <property type="entry name" value="Hanta_Gc_N"/>
    <property type="match status" value="1"/>
</dbReference>
<dbReference type="Pfam" id="PF20679">
    <property type="entry name" value="Hanta_Gn-B"/>
    <property type="match status" value="1"/>
</dbReference>
<dbReference type="Pfam" id="PF01567">
    <property type="entry name" value="Hanta_Gn-H"/>
    <property type="match status" value="1"/>
</dbReference>
<dbReference type="Pfam" id="PF10538">
    <property type="entry name" value="ITAM_Cys-rich"/>
    <property type="match status" value="1"/>
</dbReference>
<dbReference type="PIRSF" id="PIRSF003945">
    <property type="entry name" value="M_poly_HantaV"/>
    <property type="match status" value="1"/>
</dbReference>
<dbReference type="PROSITE" id="PS51056">
    <property type="entry name" value="ITAM_2"/>
    <property type="match status" value="1"/>
</dbReference>
<sequence>MGIWKWLVMASLVWPVLTLRNVYDMKIECPHTVSFGENSVIGYVELPPMPLADTAQLVPESSCSMDNHQSLNTITKYTQVSWRGKADQSQSSQNSFETVSTEVDLKGTCVLKHKMVEESYRSRKSITCYDLSCNSTYCKPTLYMIVPIHACNMMKSCLIALGPYRVQVVYERTYCMTGVLIEGKCFVPDQSVVSIIKHGIFDIASVHIVCFFVAVKGNTYKIFEQVKKSFESTCNDTENKVQGYYICIVGGNSAPIYVPTLDDFRSMEAFTGIFRSPHGEDHDLAGEETATYSIVGPANAKVPHSASSDTLSLIAFSGIPSYSSLSILTSSTEAKHVFSPGLFPKLNHTNCDKGAIPLMWTGMIDVPRYYDGIHPFTVFCVLSGPGASCEAFSEGGIFNITSPMCLVSKQNRFRLTEQQVNFVCQRVDVDIVVYCNGQRKVILTKTLVIGQCIYTITSLFSLLPGVAHSIAVELCVPGFHGWATAALLVTFCFGWVLIPAVTFIILAILKFIANIFHTSNQENRLKSVLRKIKEEFEKTKGSMVCDVCKYECETYKELKAHGVSCPQSQCPYCFTHCEPTEAAFQAHYKVCQVTHRFRDDLKKTVTPQNFTPGCYRTLNLFRYKSRCYIFTMWIFLLVLESILWAASASETPLTPVWNDNAHGVGSIPMHTDLELDFSLTSSSKYTYRRKLTNPLEAQSIDLHIEIEEQTIGVDVHALGHWFDGRLNLKTSFHCYGACTKYEYPWHTAKCHYERDYQYETSWGCNPSDCPGCGTGCTACGLYLDRLKPVGSAYKIITIRYSRRVCVQFGEENLCKIIDMNDCFVSRHVKVCIIGTVSKFSQGDTLLFFGPLEGGGLIFKHWRTSTCQFGDPGDIMSPRDKGFLCPEFPGSFRKKCNFATTPICEYDGNMVSGYKKVMATIDSFQSFNTSTMHFTDERIEWKDPDGMLRDHINILVTKDIDFDNLGENPCKIGLQTSSIEGAWGSGVGFTLTCLVSLTECPTFLTSIKACDKAICYGAESVTLTRGQNTVKVSGKGGHSGSTFKCCHGEDCSPNGLHAAAPHLDKVNGISEIENSKEYDDGAPQCGIKCWFVKSGEWISGIFSGNWIVLIVLCVFLLFSLVLLSILCPVRKHKKS</sequence>
<proteinExistence type="inferred from homology"/>
<accession>P16493</accession>